<evidence type="ECO:0000255" key="1">
    <source>
        <dbReference type="HAMAP-Rule" id="MF_00123"/>
    </source>
</evidence>
<feature type="chain" id="PRO_0000151606" description="Arginine--tRNA ligase">
    <location>
        <begin position="1"/>
        <end position="553"/>
    </location>
</feature>
<feature type="short sequence motif" description="'HIGH' region">
    <location>
        <begin position="132"/>
        <end position="140"/>
    </location>
</feature>
<dbReference type="EC" id="6.1.1.19" evidence="1"/>
<dbReference type="EMBL" id="BA000017">
    <property type="protein sequence ID" value="BAB56769.1"/>
    <property type="molecule type" value="Genomic_DNA"/>
</dbReference>
<dbReference type="RefSeq" id="WP_001021134.1">
    <property type="nucleotide sequence ID" value="NC_002758.2"/>
</dbReference>
<dbReference type="SMR" id="Q932F6"/>
<dbReference type="KEGG" id="sav:SAV0607"/>
<dbReference type="HOGENOM" id="CLU_006406_0_1_9"/>
<dbReference type="PhylomeDB" id="Q932F6"/>
<dbReference type="Proteomes" id="UP000002481">
    <property type="component" value="Chromosome"/>
</dbReference>
<dbReference type="GO" id="GO:0005737">
    <property type="term" value="C:cytoplasm"/>
    <property type="evidence" value="ECO:0007669"/>
    <property type="project" value="UniProtKB-SubCell"/>
</dbReference>
<dbReference type="GO" id="GO:0004814">
    <property type="term" value="F:arginine-tRNA ligase activity"/>
    <property type="evidence" value="ECO:0007669"/>
    <property type="project" value="UniProtKB-UniRule"/>
</dbReference>
<dbReference type="GO" id="GO:0005524">
    <property type="term" value="F:ATP binding"/>
    <property type="evidence" value="ECO:0007669"/>
    <property type="project" value="UniProtKB-UniRule"/>
</dbReference>
<dbReference type="GO" id="GO:0006420">
    <property type="term" value="P:arginyl-tRNA aminoacylation"/>
    <property type="evidence" value="ECO:0007669"/>
    <property type="project" value="UniProtKB-UniRule"/>
</dbReference>
<dbReference type="CDD" id="cd00671">
    <property type="entry name" value="ArgRS_core"/>
    <property type="match status" value="1"/>
</dbReference>
<dbReference type="FunFam" id="1.10.730.10:FF:000008">
    <property type="entry name" value="Arginine--tRNA ligase"/>
    <property type="match status" value="1"/>
</dbReference>
<dbReference type="FunFam" id="3.30.1360.70:FF:000003">
    <property type="entry name" value="Arginine--tRNA ligase"/>
    <property type="match status" value="1"/>
</dbReference>
<dbReference type="FunFam" id="3.40.50.620:FF:000062">
    <property type="entry name" value="Arginine--tRNA ligase"/>
    <property type="match status" value="1"/>
</dbReference>
<dbReference type="Gene3D" id="3.30.1360.70">
    <property type="entry name" value="Arginyl tRNA synthetase N-terminal domain"/>
    <property type="match status" value="1"/>
</dbReference>
<dbReference type="Gene3D" id="3.40.50.620">
    <property type="entry name" value="HUPs"/>
    <property type="match status" value="1"/>
</dbReference>
<dbReference type="Gene3D" id="1.10.730.10">
    <property type="entry name" value="Isoleucyl-tRNA Synthetase, Domain 1"/>
    <property type="match status" value="1"/>
</dbReference>
<dbReference type="HAMAP" id="MF_00123">
    <property type="entry name" value="Arg_tRNA_synth"/>
    <property type="match status" value="1"/>
</dbReference>
<dbReference type="InterPro" id="IPR001412">
    <property type="entry name" value="aa-tRNA-synth_I_CS"/>
</dbReference>
<dbReference type="InterPro" id="IPR001278">
    <property type="entry name" value="Arg-tRNA-ligase"/>
</dbReference>
<dbReference type="InterPro" id="IPR005148">
    <property type="entry name" value="Arg-tRNA-synth_N"/>
</dbReference>
<dbReference type="InterPro" id="IPR036695">
    <property type="entry name" value="Arg-tRNA-synth_N_sf"/>
</dbReference>
<dbReference type="InterPro" id="IPR035684">
    <property type="entry name" value="ArgRS_core"/>
</dbReference>
<dbReference type="InterPro" id="IPR008909">
    <property type="entry name" value="DALR_anticod-bd"/>
</dbReference>
<dbReference type="InterPro" id="IPR014729">
    <property type="entry name" value="Rossmann-like_a/b/a_fold"/>
</dbReference>
<dbReference type="InterPro" id="IPR009080">
    <property type="entry name" value="tRNAsynth_Ia_anticodon-bd"/>
</dbReference>
<dbReference type="NCBIfam" id="TIGR00456">
    <property type="entry name" value="argS"/>
    <property type="match status" value="1"/>
</dbReference>
<dbReference type="PANTHER" id="PTHR11956:SF5">
    <property type="entry name" value="ARGININE--TRNA LIGASE, CYTOPLASMIC"/>
    <property type="match status" value="1"/>
</dbReference>
<dbReference type="PANTHER" id="PTHR11956">
    <property type="entry name" value="ARGINYL-TRNA SYNTHETASE"/>
    <property type="match status" value="1"/>
</dbReference>
<dbReference type="Pfam" id="PF03485">
    <property type="entry name" value="Arg_tRNA_synt_N"/>
    <property type="match status" value="1"/>
</dbReference>
<dbReference type="Pfam" id="PF05746">
    <property type="entry name" value="DALR_1"/>
    <property type="match status" value="1"/>
</dbReference>
<dbReference type="Pfam" id="PF00750">
    <property type="entry name" value="tRNA-synt_1d"/>
    <property type="match status" value="1"/>
</dbReference>
<dbReference type="PRINTS" id="PR01038">
    <property type="entry name" value="TRNASYNTHARG"/>
</dbReference>
<dbReference type="SMART" id="SM01016">
    <property type="entry name" value="Arg_tRNA_synt_N"/>
    <property type="match status" value="1"/>
</dbReference>
<dbReference type="SMART" id="SM00836">
    <property type="entry name" value="DALR_1"/>
    <property type="match status" value="1"/>
</dbReference>
<dbReference type="SUPFAM" id="SSF47323">
    <property type="entry name" value="Anticodon-binding domain of a subclass of class I aminoacyl-tRNA synthetases"/>
    <property type="match status" value="1"/>
</dbReference>
<dbReference type="SUPFAM" id="SSF55190">
    <property type="entry name" value="Arginyl-tRNA synthetase (ArgRS), N-terminal 'additional' domain"/>
    <property type="match status" value="1"/>
</dbReference>
<dbReference type="SUPFAM" id="SSF52374">
    <property type="entry name" value="Nucleotidylyl transferase"/>
    <property type="match status" value="1"/>
</dbReference>
<dbReference type="PROSITE" id="PS00178">
    <property type="entry name" value="AA_TRNA_LIGASE_I"/>
    <property type="match status" value="1"/>
</dbReference>
<organism>
    <name type="scientific">Staphylococcus aureus (strain Mu50 / ATCC 700699)</name>
    <dbReference type="NCBI Taxonomy" id="158878"/>
    <lineage>
        <taxon>Bacteria</taxon>
        <taxon>Bacillati</taxon>
        <taxon>Bacillota</taxon>
        <taxon>Bacilli</taxon>
        <taxon>Bacillales</taxon>
        <taxon>Staphylococcaceae</taxon>
        <taxon>Staphylococcus</taxon>
    </lineage>
</organism>
<gene>
    <name evidence="1" type="primary">argS</name>
    <name type="ordered locus">SAV0607</name>
</gene>
<protein>
    <recommendedName>
        <fullName evidence="1">Arginine--tRNA ligase</fullName>
        <ecNumber evidence="1">6.1.1.19</ecNumber>
    </recommendedName>
    <alternativeName>
        <fullName evidence="1">Arginyl-tRNA synthetase</fullName>
        <shortName evidence="1">ArgRS</shortName>
    </alternativeName>
</protein>
<reference key="1">
    <citation type="journal article" date="2001" name="Lancet">
        <title>Whole genome sequencing of meticillin-resistant Staphylococcus aureus.</title>
        <authorList>
            <person name="Kuroda M."/>
            <person name="Ohta T."/>
            <person name="Uchiyama I."/>
            <person name="Baba T."/>
            <person name="Yuzawa H."/>
            <person name="Kobayashi I."/>
            <person name="Cui L."/>
            <person name="Oguchi A."/>
            <person name="Aoki K."/>
            <person name="Nagai Y."/>
            <person name="Lian J.-Q."/>
            <person name="Ito T."/>
            <person name="Kanamori M."/>
            <person name="Matsumaru H."/>
            <person name="Maruyama A."/>
            <person name="Murakami H."/>
            <person name="Hosoyama A."/>
            <person name="Mizutani-Ui Y."/>
            <person name="Takahashi N.K."/>
            <person name="Sawano T."/>
            <person name="Inoue R."/>
            <person name="Kaito C."/>
            <person name="Sekimizu K."/>
            <person name="Hirakawa H."/>
            <person name="Kuhara S."/>
            <person name="Goto S."/>
            <person name="Yabuzaki J."/>
            <person name="Kanehisa M."/>
            <person name="Yamashita A."/>
            <person name="Oshima K."/>
            <person name="Furuya K."/>
            <person name="Yoshino C."/>
            <person name="Shiba T."/>
            <person name="Hattori M."/>
            <person name="Ogasawara N."/>
            <person name="Hayashi H."/>
            <person name="Hiramatsu K."/>
        </authorList>
    </citation>
    <scope>NUCLEOTIDE SEQUENCE [LARGE SCALE GENOMIC DNA]</scope>
    <source>
        <strain>Mu50 / ATCC 700699</strain>
    </source>
</reference>
<proteinExistence type="inferred from homology"/>
<keyword id="KW-0030">Aminoacyl-tRNA synthetase</keyword>
<keyword id="KW-0067">ATP-binding</keyword>
<keyword id="KW-0963">Cytoplasm</keyword>
<keyword id="KW-0436">Ligase</keyword>
<keyword id="KW-0547">Nucleotide-binding</keyword>
<keyword id="KW-0648">Protein biosynthesis</keyword>
<sequence>MNIIDQVKQTLVEEIAASINKAGLADEIPDIKIEVPKDTKNGDYATNIAMVLTKIAKRNPREIAQAIVDNLDTEKAHVKQIDIAGPGFINFYLDNQYLTAIIPEAIEKGDQFGHVNESKGQNVLLEYVSANPTGDLHIGHARNAAVGDALANILTAAGYNVTREYYINDAGNQITNLARSIETHFFEALGDNSYSMPEDGYNGKDIIEIGKDLAEKHPEIKDYSEEARLKEFRKLGVEYEMAKLKNDLAEFNTHFDNWFSETSLYEKGEILEVLAKMKELGYTYEADGATWLRTTDFKDDKDRVLIKNDGTYTYFLPDIAYHFDKVKRGNDILIDLFGADHHGYINRLKASLETFGVDSNRLEIQIMQMVRLMENGKEVKMSKRTGNAITLREIMDEVGVDAARYFLTMRSPDSHFDFDMELAKEQSQDNPVYYAQYAHARICSILKQAKEQGIEVTAANDFTTITNEKAIELLKKVADFEPTIESAAEHRSAHRITNYIQDLAAHFHKFYNAEKVLTDDIEKTKAHVAMIEAVRITLKNALAMVGVSAPESM</sequence>
<accession>Q932F6</accession>
<comment type="catalytic activity">
    <reaction evidence="1">
        <text>tRNA(Arg) + L-arginine + ATP = L-arginyl-tRNA(Arg) + AMP + diphosphate</text>
        <dbReference type="Rhea" id="RHEA:20301"/>
        <dbReference type="Rhea" id="RHEA-COMP:9658"/>
        <dbReference type="Rhea" id="RHEA-COMP:9673"/>
        <dbReference type="ChEBI" id="CHEBI:30616"/>
        <dbReference type="ChEBI" id="CHEBI:32682"/>
        <dbReference type="ChEBI" id="CHEBI:33019"/>
        <dbReference type="ChEBI" id="CHEBI:78442"/>
        <dbReference type="ChEBI" id="CHEBI:78513"/>
        <dbReference type="ChEBI" id="CHEBI:456215"/>
        <dbReference type="EC" id="6.1.1.19"/>
    </reaction>
</comment>
<comment type="subunit">
    <text evidence="1">Monomer.</text>
</comment>
<comment type="subcellular location">
    <subcellularLocation>
        <location evidence="1">Cytoplasm</location>
    </subcellularLocation>
</comment>
<comment type="similarity">
    <text evidence="1">Belongs to the class-I aminoacyl-tRNA synthetase family.</text>
</comment>
<name>SYR_STAAM</name>